<accession>Q5PGZ4</accession>
<evidence type="ECO:0000255" key="1">
    <source>
        <dbReference type="HAMAP-Rule" id="MF_01561"/>
    </source>
</evidence>
<comment type="cofactor">
    <cofactor evidence="1">
        <name>Zn(2+)</name>
        <dbReference type="ChEBI" id="CHEBI:29105"/>
    </cofactor>
    <text evidence="1">Binds 3 Zn(2+) ions per subunit.</text>
</comment>
<comment type="subunit">
    <text evidence="1">Homotrimer.</text>
</comment>
<comment type="similarity">
    <text evidence="1">Belongs to the PHP family.</text>
</comment>
<name>YCDX_SALPA</name>
<feature type="chain" id="PRO_0000228697" description="Probable phosphatase YcdX">
    <location>
        <begin position="1"/>
        <end position="245"/>
    </location>
</feature>
<feature type="binding site" evidence="1">
    <location>
        <position position="7"/>
    </location>
    <ligand>
        <name>Zn(2+)</name>
        <dbReference type="ChEBI" id="CHEBI:29105"/>
        <label>1</label>
    </ligand>
</feature>
<feature type="binding site" evidence="1">
    <location>
        <position position="9"/>
    </location>
    <ligand>
        <name>Zn(2+)</name>
        <dbReference type="ChEBI" id="CHEBI:29105"/>
        <label>1</label>
    </ligand>
</feature>
<feature type="binding site" evidence="1">
    <location>
        <position position="15"/>
    </location>
    <ligand>
        <name>Zn(2+)</name>
        <dbReference type="ChEBI" id="CHEBI:29105"/>
        <label>2</label>
    </ligand>
</feature>
<feature type="binding site" evidence="1">
    <location>
        <position position="40"/>
    </location>
    <ligand>
        <name>Zn(2+)</name>
        <dbReference type="ChEBI" id="CHEBI:29105"/>
        <label>2</label>
    </ligand>
</feature>
<feature type="binding site" evidence="1">
    <location>
        <position position="73"/>
    </location>
    <ligand>
        <name>Zn(2+)</name>
        <dbReference type="ChEBI" id="CHEBI:29105"/>
        <label>1</label>
    </ligand>
</feature>
<feature type="binding site" evidence="1">
    <location>
        <position position="73"/>
    </location>
    <ligand>
        <name>Zn(2+)</name>
        <dbReference type="ChEBI" id="CHEBI:29105"/>
        <label>3</label>
    </ligand>
</feature>
<feature type="binding site" evidence="1">
    <location>
        <position position="101"/>
    </location>
    <ligand>
        <name>Zn(2+)</name>
        <dbReference type="ChEBI" id="CHEBI:29105"/>
        <label>3</label>
    </ligand>
</feature>
<feature type="binding site" evidence="1">
    <location>
        <position position="131"/>
    </location>
    <ligand>
        <name>Zn(2+)</name>
        <dbReference type="ChEBI" id="CHEBI:29105"/>
        <label>3</label>
    </ligand>
</feature>
<feature type="binding site" evidence="1">
    <location>
        <position position="192"/>
    </location>
    <ligand>
        <name>Zn(2+)</name>
        <dbReference type="ChEBI" id="CHEBI:29105"/>
        <label>1</label>
    </ligand>
</feature>
<feature type="binding site" evidence="1">
    <location>
        <position position="194"/>
    </location>
    <ligand>
        <name>Zn(2+)</name>
        <dbReference type="ChEBI" id="CHEBI:29105"/>
        <label>2</label>
    </ligand>
</feature>
<organism>
    <name type="scientific">Salmonella paratyphi A (strain ATCC 9150 / SARB42)</name>
    <dbReference type="NCBI Taxonomy" id="295319"/>
    <lineage>
        <taxon>Bacteria</taxon>
        <taxon>Pseudomonadati</taxon>
        <taxon>Pseudomonadota</taxon>
        <taxon>Gammaproteobacteria</taxon>
        <taxon>Enterobacterales</taxon>
        <taxon>Enterobacteriaceae</taxon>
        <taxon>Salmonella</taxon>
    </lineage>
</organism>
<gene>
    <name evidence="1" type="primary">ycdX</name>
    <name type="ordered locus">SPA1715</name>
</gene>
<sequence length="245" mass="26906">MYPVDLHMHTVASTHAYSTLSDYIAEAKRKGIKLFAITDHGPDMEDAPHHWHFINMRIWPRLVDGVGILRGIEANIKNINGEIDCSGKMFDSLDLIIAGFHEPVFAPHDKETNTQAMIATIASGKVHIISHPGNPKYPVEVKAIAQAAAKHHVALEINNSSFLHSRKGSEDNCRAVAAAVRDAGGWVALGSDSHTAFTLGDFTECRKILDAVNFPEDRILNVSPQRLLAFLESRGMAPVPEFAEL</sequence>
<keyword id="KW-0378">Hydrolase</keyword>
<keyword id="KW-0479">Metal-binding</keyword>
<keyword id="KW-0862">Zinc</keyword>
<dbReference type="EC" id="3.1.3.-" evidence="1"/>
<dbReference type="EMBL" id="CP000026">
    <property type="protein sequence ID" value="AAV77638.1"/>
    <property type="molecule type" value="Genomic_DNA"/>
</dbReference>
<dbReference type="RefSeq" id="WP_000283643.1">
    <property type="nucleotide sequence ID" value="NC_006511.1"/>
</dbReference>
<dbReference type="SMR" id="Q5PGZ4"/>
<dbReference type="KEGG" id="spt:SPA1715"/>
<dbReference type="HOGENOM" id="CLU_061999_0_1_6"/>
<dbReference type="Proteomes" id="UP000008185">
    <property type="component" value="Chromosome"/>
</dbReference>
<dbReference type="GO" id="GO:0005829">
    <property type="term" value="C:cytosol"/>
    <property type="evidence" value="ECO:0007669"/>
    <property type="project" value="TreeGrafter"/>
</dbReference>
<dbReference type="GO" id="GO:0016791">
    <property type="term" value="F:phosphatase activity"/>
    <property type="evidence" value="ECO:0007669"/>
    <property type="project" value="UniProtKB-UniRule"/>
</dbReference>
<dbReference type="GO" id="GO:0008270">
    <property type="term" value="F:zinc ion binding"/>
    <property type="evidence" value="ECO:0007669"/>
    <property type="project" value="UniProtKB-UniRule"/>
</dbReference>
<dbReference type="GO" id="GO:0071978">
    <property type="term" value="P:bacterial-type flagellum-dependent swarming motility"/>
    <property type="evidence" value="ECO:0007669"/>
    <property type="project" value="TreeGrafter"/>
</dbReference>
<dbReference type="CDD" id="cd07437">
    <property type="entry name" value="PHP_HisPPase_Ycdx_like"/>
    <property type="match status" value="1"/>
</dbReference>
<dbReference type="FunFam" id="3.20.20.140:FF:000008">
    <property type="entry name" value="Probable phosphatase YcdX"/>
    <property type="match status" value="1"/>
</dbReference>
<dbReference type="Gene3D" id="3.20.20.140">
    <property type="entry name" value="Metal-dependent hydrolases"/>
    <property type="match status" value="1"/>
</dbReference>
<dbReference type="HAMAP" id="MF_01561">
    <property type="entry name" value="YcdX_phosphat"/>
    <property type="match status" value="1"/>
</dbReference>
<dbReference type="InterPro" id="IPR023710">
    <property type="entry name" value="Phosphatase_YcdX_put"/>
</dbReference>
<dbReference type="InterPro" id="IPR004013">
    <property type="entry name" value="PHP_dom"/>
</dbReference>
<dbReference type="InterPro" id="IPR050243">
    <property type="entry name" value="PHP_phosphatase"/>
</dbReference>
<dbReference type="InterPro" id="IPR003141">
    <property type="entry name" value="Pol/His_phosphatase_N"/>
</dbReference>
<dbReference type="InterPro" id="IPR016195">
    <property type="entry name" value="Pol/histidinol_Pase-like"/>
</dbReference>
<dbReference type="NCBIfam" id="NF006702">
    <property type="entry name" value="PRK09248.1"/>
    <property type="match status" value="1"/>
</dbReference>
<dbReference type="PANTHER" id="PTHR36928">
    <property type="entry name" value="PHOSPHATASE YCDX-RELATED"/>
    <property type="match status" value="1"/>
</dbReference>
<dbReference type="PANTHER" id="PTHR36928:SF1">
    <property type="entry name" value="PHOSPHATASE YCDX-RELATED"/>
    <property type="match status" value="1"/>
</dbReference>
<dbReference type="Pfam" id="PF02811">
    <property type="entry name" value="PHP"/>
    <property type="match status" value="1"/>
</dbReference>
<dbReference type="SMART" id="SM00481">
    <property type="entry name" value="POLIIIAc"/>
    <property type="match status" value="1"/>
</dbReference>
<dbReference type="SUPFAM" id="SSF89550">
    <property type="entry name" value="PHP domain-like"/>
    <property type="match status" value="1"/>
</dbReference>
<protein>
    <recommendedName>
        <fullName evidence="1">Probable phosphatase YcdX</fullName>
        <ecNumber evidence="1">3.1.3.-</ecNumber>
    </recommendedName>
</protein>
<proteinExistence type="inferred from homology"/>
<reference key="1">
    <citation type="journal article" date="2004" name="Nat. Genet.">
        <title>Comparison of genome degradation in Paratyphi A and Typhi, human-restricted serovars of Salmonella enterica that cause typhoid.</title>
        <authorList>
            <person name="McClelland M."/>
            <person name="Sanderson K.E."/>
            <person name="Clifton S.W."/>
            <person name="Latreille P."/>
            <person name="Porwollik S."/>
            <person name="Sabo A."/>
            <person name="Meyer R."/>
            <person name="Bieri T."/>
            <person name="Ozersky P."/>
            <person name="McLellan M."/>
            <person name="Harkins C.R."/>
            <person name="Wang C."/>
            <person name="Nguyen C."/>
            <person name="Berghoff A."/>
            <person name="Elliott G."/>
            <person name="Kohlberg S."/>
            <person name="Strong C."/>
            <person name="Du F."/>
            <person name="Carter J."/>
            <person name="Kremizki C."/>
            <person name="Layman D."/>
            <person name="Leonard S."/>
            <person name="Sun H."/>
            <person name="Fulton L."/>
            <person name="Nash W."/>
            <person name="Miner T."/>
            <person name="Minx P."/>
            <person name="Delehaunty K."/>
            <person name="Fronick C."/>
            <person name="Magrini V."/>
            <person name="Nhan M."/>
            <person name="Warren W."/>
            <person name="Florea L."/>
            <person name="Spieth J."/>
            <person name="Wilson R.K."/>
        </authorList>
    </citation>
    <scope>NUCLEOTIDE SEQUENCE [LARGE SCALE GENOMIC DNA]</scope>
    <source>
        <strain>ATCC 9150 / SARB42</strain>
    </source>
</reference>